<sequence length="358" mass="40350">MFDQLDIVEERYEQLNELLSDPDVVNDSDKLRKYSKEQADLQKTVDVYRNYKAKKEELADIEEMLSETDDKEEVEMLKEESNGIKAELPNLEEELKILLIPKDPNDDKDVIVEIRAAAGGDEAAIFAGDLMRMYSKYAESQGFKTEIVEASESDHGGYKEISFSVSGNGAYSKLKFENGAHRVQRVPETESGGRIHTSTATVAVLPEVEDVEIEIRNEDLKIDTYRSSGAGGQHVNTTDSAVRITHLPTGVIATSSEKSQIQNREKAMKVLKARLYDMKVQEEQQKYASQRKSAVGTGDRSERIRTYNYPQSRVTDHRIGLTLQKLGQIMEGHLEEIIDALTLSEQTDKLKELNNGEL</sequence>
<gene>
    <name evidence="1" type="primary">prfA</name>
    <name type="ordered locus">SAS2021</name>
</gene>
<keyword id="KW-0963">Cytoplasm</keyword>
<keyword id="KW-0488">Methylation</keyword>
<keyword id="KW-0648">Protein biosynthesis</keyword>
<protein>
    <recommendedName>
        <fullName evidence="1">Peptide chain release factor 1</fullName>
        <shortName evidence="1">RF-1</shortName>
    </recommendedName>
</protein>
<proteinExistence type="inferred from homology"/>
<comment type="function">
    <text evidence="1">Peptide chain release factor 1 directs the termination of translation in response to the peptide chain termination codons UAG and UAA.</text>
</comment>
<comment type="subcellular location">
    <subcellularLocation>
        <location evidence="1">Cytoplasm</location>
    </subcellularLocation>
</comment>
<comment type="PTM">
    <text evidence="1">Methylated by PrmC. Methylation increases the termination efficiency of RF1.</text>
</comment>
<comment type="similarity">
    <text evidence="1">Belongs to the prokaryotic/mitochondrial release factor family.</text>
</comment>
<evidence type="ECO:0000255" key="1">
    <source>
        <dbReference type="HAMAP-Rule" id="MF_00093"/>
    </source>
</evidence>
<dbReference type="EMBL" id="BX571857">
    <property type="protein sequence ID" value="CAG43829.1"/>
    <property type="molecule type" value="Genomic_DNA"/>
</dbReference>
<dbReference type="RefSeq" id="WP_000460242.1">
    <property type="nucleotide sequence ID" value="NC_002953.3"/>
</dbReference>
<dbReference type="SMR" id="Q6G7J2"/>
<dbReference type="KEGG" id="sas:SAS2021"/>
<dbReference type="HOGENOM" id="CLU_036856_0_1_9"/>
<dbReference type="GO" id="GO:0005737">
    <property type="term" value="C:cytoplasm"/>
    <property type="evidence" value="ECO:0007669"/>
    <property type="project" value="UniProtKB-SubCell"/>
</dbReference>
<dbReference type="GO" id="GO:0016149">
    <property type="term" value="F:translation release factor activity, codon specific"/>
    <property type="evidence" value="ECO:0007669"/>
    <property type="project" value="UniProtKB-UniRule"/>
</dbReference>
<dbReference type="FunFam" id="3.30.160.20:FF:000004">
    <property type="entry name" value="Peptide chain release factor 1"/>
    <property type="match status" value="1"/>
</dbReference>
<dbReference type="FunFam" id="3.30.70.1660:FF:000002">
    <property type="entry name" value="Peptide chain release factor 1"/>
    <property type="match status" value="1"/>
</dbReference>
<dbReference type="FunFam" id="3.30.70.1660:FF:000004">
    <property type="entry name" value="Peptide chain release factor 1"/>
    <property type="match status" value="1"/>
</dbReference>
<dbReference type="Gene3D" id="3.30.160.20">
    <property type="match status" value="1"/>
</dbReference>
<dbReference type="Gene3D" id="3.30.70.1660">
    <property type="match status" value="1"/>
</dbReference>
<dbReference type="Gene3D" id="6.10.140.1950">
    <property type="match status" value="1"/>
</dbReference>
<dbReference type="HAMAP" id="MF_00093">
    <property type="entry name" value="Rel_fac_1"/>
    <property type="match status" value="1"/>
</dbReference>
<dbReference type="InterPro" id="IPR005139">
    <property type="entry name" value="PCRF"/>
</dbReference>
<dbReference type="InterPro" id="IPR000352">
    <property type="entry name" value="Pep_chain_release_fac_I"/>
</dbReference>
<dbReference type="InterPro" id="IPR045853">
    <property type="entry name" value="Pep_chain_release_fac_I_sf"/>
</dbReference>
<dbReference type="InterPro" id="IPR050057">
    <property type="entry name" value="Prokaryotic/Mito_RF"/>
</dbReference>
<dbReference type="InterPro" id="IPR004373">
    <property type="entry name" value="RF-1"/>
</dbReference>
<dbReference type="NCBIfam" id="TIGR00019">
    <property type="entry name" value="prfA"/>
    <property type="match status" value="1"/>
</dbReference>
<dbReference type="NCBIfam" id="NF001859">
    <property type="entry name" value="PRK00591.1"/>
    <property type="match status" value="1"/>
</dbReference>
<dbReference type="PANTHER" id="PTHR43804">
    <property type="entry name" value="LD18447P"/>
    <property type="match status" value="1"/>
</dbReference>
<dbReference type="PANTHER" id="PTHR43804:SF7">
    <property type="entry name" value="LD18447P"/>
    <property type="match status" value="1"/>
</dbReference>
<dbReference type="Pfam" id="PF03462">
    <property type="entry name" value="PCRF"/>
    <property type="match status" value="1"/>
</dbReference>
<dbReference type="Pfam" id="PF00472">
    <property type="entry name" value="RF-1"/>
    <property type="match status" value="1"/>
</dbReference>
<dbReference type="SMART" id="SM00937">
    <property type="entry name" value="PCRF"/>
    <property type="match status" value="1"/>
</dbReference>
<dbReference type="SUPFAM" id="SSF75620">
    <property type="entry name" value="Release factor"/>
    <property type="match status" value="1"/>
</dbReference>
<dbReference type="PROSITE" id="PS00745">
    <property type="entry name" value="RF_PROK_I"/>
    <property type="match status" value="1"/>
</dbReference>
<accession>Q6G7J2</accession>
<reference key="1">
    <citation type="journal article" date="2004" name="Proc. Natl. Acad. Sci. U.S.A.">
        <title>Complete genomes of two clinical Staphylococcus aureus strains: evidence for the rapid evolution of virulence and drug resistance.</title>
        <authorList>
            <person name="Holden M.T.G."/>
            <person name="Feil E.J."/>
            <person name="Lindsay J.A."/>
            <person name="Peacock S.J."/>
            <person name="Day N.P.J."/>
            <person name="Enright M.C."/>
            <person name="Foster T.J."/>
            <person name="Moore C.E."/>
            <person name="Hurst L."/>
            <person name="Atkin R."/>
            <person name="Barron A."/>
            <person name="Bason N."/>
            <person name="Bentley S.D."/>
            <person name="Chillingworth C."/>
            <person name="Chillingworth T."/>
            <person name="Churcher C."/>
            <person name="Clark L."/>
            <person name="Corton C."/>
            <person name="Cronin A."/>
            <person name="Doggett J."/>
            <person name="Dowd L."/>
            <person name="Feltwell T."/>
            <person name="Hance Z."/>
            <person name="Harris B."/>
            <person name="Hauser H."/>
            <person name="Holroyd S."/>
            <person name="Jagels K."/>
            <person name="James K.D."/>
            <person name="Lennard N."/>
            <person name="Line A."/>
            <person name="Mayes R."/>
            <person name="Moule S."/>
            <person name="Mungall K."/>
            <person name="Ormond D."/>
            <person name="Quail M.A."/>
            <person name="Rabbinowitsch E."/>
            <person name="Rutherford K.M."/>
            <person name="Sanders M."/>
            <person name="Sharp S."/>
            <person name="Simmonds M."/>
            <person name="Stevens K."/>
            <person name="Whitehead S."/>
            <person name="Barrell B.G."/>
            <person name="Spratt B.G."/>
            <person name="Parkhill J."/>
        </authorList>
    </citation>
    <scope>NUCLEOTIDE SEQUENCE [LARGE SCALE GENOMIC DNA]</scope>
    <source>
        <strain>MSSA476</strain>
    </source>
</reference>
<feature type="chain" id="PRO_0000177741" description="Peptide chain release factor 1">
    <location>
        <begin position="1"/>
        <end position="358"/>
    </location>
</feature>
<feature type="modified residue" description="N5-methylglutamine" evidence="1">
    <location>
        <position position="233"/>
    </location>
</feature>
<name>RF1_STAAS</name>
<organism>
    <name type="scientific">Staphylococcus aureus (strain MSSA476)</name>
    <dbReference type="NCBI Taxonomy" id="282459"/>
    <lineage>
        <taxon>Bacteria</taxon>
        <taxon>Bacillati</taxon>
        <taxon>Bacillota</taxon>
        <taxon>Bacilli</taxon>
        <taxon>Bacillales</taxon>
        <taxon>Staphylococcaceae</taxon>
        <taxon>Staphylococcus</taxon>
    </lineage>
</organism>